<dbReference type="EC" id="2.7.7.60" evidence="1"/>
<dbReference type="EMBL" id="AE000516">
    <property type="protein sequence ID" value="AAK48046.1"/>
    <property type="molecule type" value="Genomic_DNA"/>
</dbReference>
<dbReference type="PIR" id="D70607">
    <property type="entry name" value="D70607"/>
</dbReference>
<dbReference type="RefSeq" id="WP_003419436.1">
    <property type="nucleotide sequence ID" value="NZ_KK341227.1"/>
</dbReference>
<dbReference type="SMR" id="P9WKG8"/>
<dbReference type="GeneID" id="45427570"/>
<dbReference type="KEGG" id="mtc:MT3688"/>
<dbReference type="PATRIC" id="fig|83331.31.peg.3971"/>
<dbReference type="HOGENOM" id="CLU_061281_1_1_11"/>
<dbReference type="UniPathway" id="UPA00056">
    <property type="reaction ID" value="UER00093"/>
</dbReference>
<dbReference type="Proteomes" id="UP000001020">
    <property type="component" value="Chromosome"/>
</dbReference>
<dbReference type="GO" id="GO:0050518">
    <property type="term" value="F:2-C-methyl-D-erythritol 4-phosphate cytidylyltransferase activity"/>
    <property type="evidence" value="ECO:0007669"/>
    <property type="project" value="UniProtKB-UniRule"/>
</dbReference>
<dbReference type="GO" id="GO:0019288">
    <property type="term" value="P:isopentenyl diphosphate biosynthetic process, methylerythritol 4-phosphate pathway"/>
    <property type="evidence" value="ECO:0007669"/>
    <property type="project" value="UniProtKB-UniRule"/>
</dbReference>
<dbReference type="CDD" id="cd02516">
    <property type="entry name" value="CDP-ME_synthetase"/>
    <property type="match status" value="1"/>
</dbReference>
<dbReference type="FunFam" id="3.90.550.10:FF:000208">
    <property type="entry name" value="2-C-methyl-D-erythritol 4-phosphate cytidylyltransferase"/>
    <property type="match status" value="1"/>
</dbReference>
<dbReference type="Gene3D" id="3.90.550.10">
    <property type="entry name" value="Spore Coat Polysaccharide Biosynthesis Protein SpsA, Chain A"/>
    <property type="match status" value="1"/>
</dbReference>
<dbReference type="HAMAP" id="MF_00108">
    <property type="entry name" value="IspD"/>
    <property type="match status" value="1"/>
</dbReference>
<dbReference type="InterPro" id="IPR001228">
    <property type="entry name" value="IspD"/>
</dbReference>
<dbReference type="InterPro" id="IPR034683">
    <property type="entry name" value="IspD/TarI"/>
</dbReference>
<dbReference type="InterPro" id="IPR050088">
    <property type="entry name" value="IspD/TarI_cytidylyltransf_bact"/>
</dbReference>
<dbReference type="InterPro" id="IPR018294">
    <property type="entry name" value="ISPD_synthase_CS"/>
</dbReference>
<dbReference type="InterPro" id="IPR029044">
    <property type="entry name" value="Nucleotide-diphossugar_trans"/>
</dbReference>
<dbReference type="NCBIfam" id="TIGR00453">
    <property type="entry name" value="ispD"/>
    <property type="match status" value="1"/>
</dbReference>
<dbReference type="PANTHER" id="PTHR32125">
    <property type="entry name" value="2-C-METHYL-D-ERYTHRITOL 4-PHOSPHATE CYTIDYLYLTRANSFERASE, CHLOROPLASTIC"/>
    <property type="match status" value="1"/>
</dbReference>
<dbReference type="PANTHER" id="PTHR32125:SF4">
    <property type="entry name" value="2-C-METHYL-D-ERYTHRITOL 4-PHOSPHATE CYTIDYLYLTRANSFERASE, CHLOROPLASTIC"/>
    <property type="match status" value="1"/>
</dbReference>
<dbReference type="Pfam" id="PF01128">
    <property type="entry name" value="IspD"/>
    <property type="match status" value="1"/>
</dbReference>
<dbReference type="SUPFAM" id="SSF53448">
    <property type="entry name" value="Nucleotide-diphospho-sugar transferases"/>
    <property type="match status" value="1"/>
</dbReference>
<dbReference type="PROSITE" id="PS01295">
    <property type="entry name" value="ISPD"/>
    <property type="match status" value="1"/>
</dbReference>
<accession>P9WKG8</accession>
<accession>L0TG52</accession>
<accession>P96864</accession>
<feature type="chain" id="PRO_0000427656" description="2-C-methyl-D-erythritol 4-phosphate cytidylyltransferase">
    <location>
        <begin position="1"/>
        <end position="231"/>
    </location>
</feature>
<feature type="site" description="Transition state stabilizer" evidence="1">
    <location>
        <position position="20"/>
    </location>
</feature>
<feature type="site" description="Transition state stabilizer" evidence="1">
    <location>
        <position position="27"/>
    </location>
</feature>
<feature type="site" description="Positions MEP for the nucleophilic attack" evidence="1">
    <location>
        <position position="157"/>
    </location>
</feature>
<feature type="site" description="Positions MEP for the nucleophilic attack" evidence="1">
    <location>
        <position position="215"/>
    </location>
</feature>
<proteinExistence type="inferred from homology"/>
<reference key="1">
    <citation type="journal article" date="2002" name="J. Bacteriol.">
        <title>Whole-genome comparison of Mycobacterium tuberculosis clinical and laboratory strains.</title>
        <authorList>
            <person name="Fleischmann R.D."/>
            <person name="Alland D."/>
            <person name="Eisen J.A."/>
            <person name="Carpenter L."/>
            <person name="White O."/>
            <person name="Peterson J.D."/>
            <person name="DeBoy R.T."/>
            <person name="Dodson R.J."/>
            <person name="Gwinn M.L."/>
            <person name="Haft D.H."/>
            <person name="Hickey E.K."/>
            <person name="Kolonay J.F."/>
            <person name="Nelson W.C."/>
            <person name="Umayam L.A."/>
            <person name="Ermolaeva M.D."/>
            <person name="Salzberg S.L."/>
            <person name="Delcher A."/>
            <person name="Utterback T.R."/>
            <person name="Weidman J.F."/>
            <person name="Khouri H.M."/>
            <person name="Gill J."/>
            <person name="Mikula A."/>
            <person name="Bishai W."/>
            <person name="Jacobs W.R. Jr."/>
            <person name="Venter J.C."/>
            <person name="Fraser C.M."/>
        </authorList>
    </citation>
    <scope>NUCLEOTIDE SEQUENCE [LARGE SCALE GENOMIC DNA]</scope>
    <source>
        <strain>CDC 1551 / Oshkosh</strain>
    </source>
</reference>
<evidence type="ECO:0000255" key="1">
    <source>
        <dbReference type="HAMAP-Rule" id="MF_00108"/>
    </source>
</evidence>
<protein>
    <recommendedName>
        <fullName evidence="1">2-C-methyl-D-erythritol 4-phosphate cytidylyltransferase</fullName>
        <ecNumber evidence="1">2.7.7.60</ecNumber>
    </recommendedName>
    <alternativeName>
        <fullName evidence="1">4-diphosphocytidyl-2C-methyl-D-erythritol synthase</fullName>
    </alternativeName>
    <alternativeName>
        <fullName evidence="1">MEP cytidylyltransferase</fullName>
        <shortName evidence="1">MCT</shortName>
    </alternativeName>
</protein>
<name>ISPD_MYCTO</name>
<gene>
    <name evidence="1" type="primary">ispD</name>
    <name type="ordered locus">MT3688</name>
</gene>
<sequence length="231" mass="24074">MVREAGEVVAIVPAAGSGERLAVGVPKAFYQLDGQTLIERAVDGLLDSGVVDTVVVAVPADRTDEARQILGHRAMIVAGGSNRTDTVNLALTVLSGTAEPEFVLVHDAARALTPPALVARVVEALRDGYAAVVPVLPLSDTIKAVDANGVVLGTPERAGLRAVQTPQGFTTDLLLRSYQRGSLDLPAAEYTDDASLVEHIGGQVQVVDGDPLAFKITTKLDLLLAQAIVRG</sequence>
<organism>
    <name type="scientific">Mycobacterium tuberculosis (strain CDC 1551 / Oshkosh)</name>
    <dbReference type="NCBI Taxonomy" id="83331"/>
    <lineage>
        <taxon>Bacteria</taxon>
        <taxon>Bacillati</taxon>
        <taxon>Actinomycetota</taxon>
        <taxon>Actinomycetes</taxon>
        <taxon>Mycobacteriales</taxon>
        <taxon>Mycobacteriaceae</taxon>
        <taxon>Mycobacterium</taxon>
        <taxon>Mycobacterium tuberculosis complex</taxon>
    </lineage>
</organism>
<comment type="function">
    <text evidence="1">Catalyzes the formation of 4-diphosphocytidyl-2-C-methyl-D-erythritol from CTP and 2-C-methyl-D-erythritol 4-phosphate (MEP).</text>
</comment>
<comment type="catalytic activity">
    <reaction evidence="1">
        <text>2-C-methyl-D-erythritol 4-phosphate + CTP + H(+) = 4-CDP-2-C-methyl-D-erythritol + diphosphate</text>
        <dbReference type="Rhea" id="RHEA:13429"/>
        <dbReference type="ChEBI" id="CHEBI:15378"/>
        <dbReference type="ChEBI" id="CHEBI:33019"/>
        <dbReference type="ChEBI" id="CHEBI:37563"/>
        <dbReference type="ChEBI" id="CHEBI:57823"/>
        <dbReference type="ChEBI" id="CHEBI:58262"/>
        <dbReference type="EC" id="2.7.7.60"/>
    </reaction>
</comment>
<comment type="pathway">
    <text evidence="1">Isoprenoid biosynthesis; isopentenyl diphosphate biosynthesis via DXP pathway; isopentenyl diphosphate from 1-deoxy-D-xylulose 5-phosphate: step 2/6.</text>
</comment>
<comment type="similarity">
    <text evidence="1">Belongs to the IspD/TarI cytidylyltransferase family. IspD subfamily.</text>
</comment>
<keyword id="KW-0414">Isoprene biosynthesis</keyword>
<keyword id="KW-0548">Nucleotidyltransferase</keyword>
<keyword id="KW-1185">Reference proteome</keyword>
<keyword id="KW-0808">Transferase</keyword>